<protein>
    <recommendedName>
        <fullName>72 kDa type IV collagenase</fullName>
        <ecNumber evidence="2">3.4.24.24</ecNumber>
    </recommendedName>
    <alternativeName>
        <fullName>72 kDa gelatinase</fullName>
    </alternativeName>
    <alternativeName>
        <fullName>Matrix metalloproteinase-2</fullName>
        <shortName>MMP-2</shortName>
    </alternativeName>
    <component>
        <recommendedName>
            <fullName>PEX</fullName>
        </recommendedName>
    </component>
</protein>
<name>MMP2_BOVIN</name>
<accession>Q9GLE5</accession>
<comment type="function">
    <text evidence="1">Ubiquitinous metalloproteinase that is involved in diverse functions such as remodeling of the vasculature, angiogenesis, tissue repair, tumor invasion, inflammation, and atherosclerotic plaque rupture. As well as degrading extracellular matrix proteins, can also act on several nonmatrix proteins such as big endothelial 1 and beta-type CGRP promoting vasoconstriction. Also cleaves KISS at a Gly-|-Leu bond. Appears to have a role in myocardial cell death pathways. Contributes to myocardial oxidative stress by regulating the activity of GSK3beta. Cleaves GSK3beta in vitro. Involved in the formation of the fibrovascular tissues (By similarity).</text>
</comment>
<comment type="function">
    <text evidence="1">PEX, the C-terminal non-catalytic fragment of MMP2, possesses anti-angiogenic and anti-tumor properties and inhibits cell migration and cell adhesion to FGF2 and vitronectin. Ligand for integrin alpha-v/beta-3 on the surface of blood vessels (By similarity).</text>
</comment>
<comment type="catalytic activity">
    <reaction evidence="2">
        <text>Cleavage of gelatin type I and collagen types IV, V, VII, X. Cleaves the collagen-like sequence Pro-Gln-Gly-|-Ile-Ala-Gly-Gln.</text>
        <dbReference type="EC" id="3.4.24.24"/>
    </reaction>
</comment>
<comment type="cofactor">
    <cofactor evidence="2">
        <name>Ca(2+)</name>
        <dbReference type="ChEBI" id="CHEBI:29108"/>
    </cofactor>
    <text evidence="2">Binds 4 Ca(2+) ions per subunit.</text>
</comment>
<comment type="cofactor">
    <cofactor evidence="2">
        <name>Zn(2+)</name>
        <dbReference type="ChEBI" id="CHEBI:29105"/>
    </cofactor>
    <text evidence="2">Binds 2 Zn(2+) ions per subunit.</text>
</comment>
<comment type="subunit">
    <text evidence="1">Interacts (via the C-terminal hemopexin-like domains-containing region) with the integrin alpha-V/beta-3; the interaction promotes vascular invasion in angiogenic vessels and melamoma cells. Interacts (via the C-terminal PEX domain) with TIMP2 (via the C-terminal); the interaction inhibits the degradation activity. Interacts with GSK3B (By similarity).</text>
</comment>
<comment type="subcellular location">
    <subcellularLocation>
        <location evidence="1">Secreted</location>
        <location evidence="1">Extracellular space</location>
        <location evidence="1">Extracellular matrix</location>
    </subcellularLocation>
    <subcellularLocation>
        <location evidence="1">Membrane</location>
    </subcellularLocation>
    <subcellularLocation>
        <location evidence="1">Nucleus</location>
    </subcellularLocation>
    <text evidence="1">Colocalizes with integrin alphaV/beta3 at the membrane surface in angiogenic blood vessels and melanomas. Found in mitochondria, along microfibrils, and in nuclei of cardiomyocytes (By similarity).</text>
</comment>
<comment type="domain">
    <text>The conserved cysteine present in the cysteine-switch motif binds the catalytic zinc ion, thus inhibiting the enzyme. The dissociation of the cysteine from the zinc ion upon the activation-peptide release activates the enzyme.</text>
</comment>
<comment type="PTM">
    <text evidence="1">Phosphorylation on multiple sites modulates enzymatic activity. Phosphorylated by PKC in vitro (By similarity).</text>
</comment>
<comment type="PTM">
    <text evidence="1">The propeptide is processed by MMP14 (MT-MMP1) and MMP16 (MT-MMP3). Autocatalytic cleavage in the C-terminal produces the anti-angiogenic peptide, PEX. This processing appears to be facilitated by binding integrinv/beta3 (By similarity).</text>
</comment>
<comment type="similarity">
    <text evidence="7">Belongs to the peptidase M10A family.</text>
</comment>
<keyword id="KW-0037">Angiogenesis</keyword>
<keyword id="KW-0106">Calcium</keyword>
<keyword id="KW-0177">Collagen degradation</keyword>
<keyword id="KW-1015">Disulfide bond</keyword>
<keyword id="KW-0272">Extracellular matrix</keyword>
<keyword id="KW-0325">Glycoprotein</keyword>
<keyword id="KW-0378">Hydrolase</keyword>
<keyword id="KW-0472">Membrane</keyword>
<keyword id="KW-0479">Metal-binding</keyword>
<keyword id="KW-0482">Metalloprotease</keyword>
<keyword id="KW-0539">Nucleus</keyword>
<keyword id="KW-0597">Phosphoprotein</keyword>
<keyword id="KW-0645">Protease</keyword>
<keyword id="KW-1185">Reference proteome</keyword>
<keyword id="KW-0677">Repeat</keyword>
<keyword id="KW-0964">Secreted</keyword>
<keyword id="KW-0732">Signal</keyword>
<keyword id="KW-0862">Zinc</keyword>
<keyword id="KW-0865">Zymogen</keyword>
<reference key="1">
    <citation type="submission" date="2000-07" db="EMBL/GenBank/DDBJ databases">
        <title>Molecular cloning and biological characterization of bovine matrix metalloprotease 2 (bMMP-2).</title>
        <authorList>
            <person name="Yan L."/>
            <person name="Zhang B."/>
            <person name="Tsang P."/>
            <person name="Fang J."/>
            <person name="Yu Y."/>
            <person name="Ingber D.E."/>
            <person name="Moses M.A."/>
        </authorList>
    </citation>
    <scope>NUCLEOTIDE SEQUENCE [MRNA]</scope>
</reference>
<proteinExistence type="evidence at transcript level"/>
<sequence length="661" mass="73777">MTEARVSRGALAALLRALCALGCLLGRAAAAPSPIIKFPGDVAPKTDKELAVQYLNTFYGCPKESCNLFVLKDTLKKMQKFFGLPQTGELDQSTIETMRKPRCGNPDVANYNFFPRKPKWDKNQITYRIIGYTPDLDPQTVDDAFARAFQVWSDVTPLRFSRIHDGEADIMINFGRWEHGDGYPFDGKDGLLAHAFAPGPGVGGDSHFDDDELRTLGEGQVVRVKYGNADGEYCKFPFRFNGKEYTSCTDTGRSDGFLWCSTTYNFDKDGKYGFCPHEALFTMGGNADGQPCKFPFRFQGTSYDSCTTEGRTDGYRWCGTTEDYDRDKEYGFCPETAMSTVGGNSEGAPCVLPFTFLGNKHESCTSAGRSDGKLWCATTSNYDDDRKWGFCPDQGYSLFLVAAHEFGHAMGLEHSQDPGALMAPIYTYTKNFRLSHDDIQGIQELYGASPDIDTGTGPTPTLGPVTPELCKQDIVFDGISQIRGEIFFFKDRFIWRTVTPRDKPTGPLLVATFWPELPEKIDAVYEDPQEEKAVFFAGNEYWVYSASTLERGYPKPLTSLGLPPGVQKVDAAFNWSKNKKTYIFAGDKFWRYNEVKKKMDPGFPKLIADAWNAIPDNLDAVVDLQGGGHSYFFKGAYYLKLENQSLKSVKFGSIKSDWLGC</sequence>
<dbReference type="EC" id="3.4.24.24" evidence="2"/>
<dbReference type="EMBL" id="AF290428">
    <property type="protein sequence ID" value="AAG28169.1"/>
    <property type="molecule type" value="mRNA"/>
</dbReference>
<dbReference type="RefSeq" id="NP_777170.1">
    <property type="nucleotide sequence ID" value="NM_174745.2"/>
</dbReference>
<dbReference type="SMR" id="Q9GLE5"/>
<dbReference type="FunCoup" id="Q9GLE5">
    <property type="interactions" value="670"/>
</dbReference>
<dbReference type="STRING" id="9913.ENSBTAP00000025657"/>
<dbReference type="MEROPS" id="M10.003"/>
<dbReference type="GlyCosmos" id="Q9GLE5">
    <property type="glycosylation" value="2 sites, No reported glycans"/>
</dbReference>
<dbReference type="GlyGen" id="Q9GLE5">
    <property type="glycosylation" value="2 sites"/>
</dbReference>
<dbReference type="PaxDb" id="9913-ENSBTAP00000025657"/>
<dbReference type="GeneID" id="282872"/>
<dbReference type="KEGG" id="bta:282872"/>
<dbReference type="CTD" id="4313"/>
<dbReference type="eggNOG" id="KOG1565">
    <property type="taxonomic scope" value="Eukaryota"/>
</dbReference>
<dbReference type="InParanoid" id="Q9GLE5"/>
<dbReference type="OrthoDB" id="406838at2759"/>
<dbReference type="Proteomes" id="UP000009136">
    <property type="component" value="Unplaced"/>
</dbReference>
<dbReference type="GO" id="GO:0031012">
    <property type="term" value="C:extracellular matrix"/>
    <property type="evidence" value="ECO:0007669"/>
    <property type="project" value="InterPro"/>
</dbReference>
<dbReference type="GO" id="GO:0005615">
    <property type="term" value="C:extracellular space"/>
    <property type="evidence" value="ECO:0000318"/>
    <property type="project" value="GO_Central"/>
</dbReference>
<dbReference type="GO" id="GO:0016020">
    <property type="term" value="C:membrane"/>
    <property type="evidence" value="ECO:0007669"/>
    <property type="project" value="UniProtKB-SubCell"/>
</dbReference>
<dbReference type="GO" id="GO:0005634">
    <property type="term" value="C:nucleus"/>
    <property type="evidence" value="ECO:0007669"/>
    <property type="project" value="UniProtKB-SubCell"/>
</dbReference>
<dbReference type="GO" id="GO:0004175">
    <property type="term" value="F:endopeptidase activity"/>
    <property type="evidence" value="ECO:0000250"/>
    <property type="project" value="UniProtKB"/>
</dbReference>
<dbReference type="GO" id="GO:0004222">
    <property type="term" value="F:metalloendopeptidase activity"/>
    <property type="evidence" value="ECO:0000318"/>
    <property type="project" value="GO_Central"/>
</dbReference>
<dbReference type="GO" id="GO:0008270">
    <property type="term" value="F:zinc ion binding"/>
    <property type="evidence" value="ECO:0007669"/>
    <property type="project" value="InterPro"/>
</dbReference>
<dbReference type="GO" id="GO:0001525">
    <property type="term" value="P:angiogenesis"/>
    <property type="evidence" value="ECO:0007669"/>
    <property type="project" value="UniProtKB-KW"/>
</dbReference>
<dbReference type="GO" id="GO:0071492">
    <property type="term" value="P:cellular response to UV-A"/>
    <property type="evidence" value="ECO:0000250"/>
    <property type="project" value="UniProtKB"/>
</dbReference>
<dbReference type="GO" id="GO:0030574">
    <property type="term" value="P:collagen catabolic process"/>
    <property type="evidence" value="ECO:0000318"/>
    <property type="project" value="GO_Central"/>
</dbReference>
<dbReference type="GO" id="GO:0030198">
    <property type="term" value="P:extracellular matrix organization"/>
    <property type="evidence" value="ECO:0000318"/>
    <property type="project" value="GO_Central"/>
</dbReference>
<dbReference type="GO" id="GO:0006508">
    <property type="term" value="P:proteolysis"/>
    <property type="evidence" value="ECO:0007669"/>
    <property type="project" value="UniProtKB-KW"/>
</dbReference>
<dbReference type="GO" id="GO:0001666">
    <property type="term" value="P:response to hypoxia"/>
    <property type="evidence" value="ECO:0000318"/>
    <property type="project" value="GO_Central"/>
</dbReference>
<dbReference type="GO" id="GO:0048771">
    <property type="term" value="P:tissue remodeling"/>
    <property type="evidence" value="ECO:0000318"/>
    <property type="project" value="GO_Central"/>
</dbReference>
<dbReference type="CDD" id="cd00062">
    <property type="entry name" value="FN2"/>
    <property type="match status" value="3"/>
</dbReference>
<dbReference type="CDD" id="cd00094">
    <property type="entry name" value="HX"/>
    <property type="match status" value="1"/>
</dbReference>
<dbReference type="CDD" id="cd04278">
    <property type="entry name" value="ZnMc_MMP"/>
    <property type="match status" value="1"/>
</dbReference>
<dbReference type="FunFam" id="2.10.10.10:FF:000002">
    <property type="entry name" value="72 kDa type IV collagenase"/>
    <property type="match status" value="1"/>
</dbReference>
<dbReference type="FunFam" id="2.110.10.10:FF:000004">
    <property type="entry name" value="72 kDa type IV collagenase"/>
    <property type="match status" value="1"/>
</dbReference>
<dbReference type="FunFam" id="3.40.390.10:FF:000010">
    <property type="entry name" value="72 kDa type IV collagenase"/>
    <property type="match status" value="1"/>
</dbReference>
<dbReference type="FunFam" id="2.10.10.10:FF:000001">
    <property type="entry name" value="Fibronectin 1a isoform 1"/>
    <property type="match status" value="2"/>
</dbReference>
<dbReference type="Gene3D" id="3.40.390.10">
    <property type="entry name" value="Collagenase (Catalytic Domain)"/>
    <property type="match status" value="2"/>
</dbReference>
<dbReference type="Gene3D" id="2.10.10.10">
    <property type="entry name" value="Fibronectin, type II, collagen-binding"/>
    <property type="match status" value="2"/>
</dbReference>
<dbReference type="Gene3D" id="2.110.10.10">
    <property type="entry name" value="Hemopexin-like domain"/>
    <property type="match status" value="1"/>
</dbReference>
<dbReference type="InterPro" id="IPR000562">
    <property type="entry name" value="FN_type2_dom"/>
</dbReference>
<dbReference type="InterPro" id="IPR036943">
    <property type="entry name" value="FN_type2_sf"/>
</dbReference>
<dbReference type="InterPro" id="IPR000585">
    <property type="entry name" value="Hemopexin-like_dom"/>
</dbReference>
<dbReference type="InterPro" id="IPR036375">
    <property type="entry name" value="Hemopexin-like_dom_sf"/>
</dbReference>
<dbReference type="InterPro" id="IPR018487">
    <property type="entry name" value="Hemopexin-like_repeat"/>
</dbReference>
<dbReference type="InterPro" id="IPR018486">
    <property type="entry name" value="Hemopexin_CS"/>
</dbReference>
<dbReference type="InterPro" id="IPR013806">
    <property type="entry name" value="Kringle-like"/>
</dbReference>
<dbReference type="InterPro" id="IPR033739">
    <property type="entry name" value="M10A_MMP"/>
</dbReference>
<dbReference type="InterPro" id="IPR024079">
    <property type="entry name" value="MetalloPept_cat_dom_sf"/>
</dbReference>
<dbReference type="InterPro" id="IPR001818">
    <property type="entry name" value="Pept_M10_metallopeptidase"/>
</dbReference>
<dbReference type="InterPro" id="IPR021190">
    <property type="entry name" value="Pept_M10A"/>
</dbReference>
<dbReference type="InterPro" id="IPR021158">
    <property type="entry name" value="Pept_M10A_Zn_BS"/>
</dbReference>
<dbReference type="InterPro" id="IPR006026">
    <property type="entry name" value="Peptidase_Metallo"/>
</dbReference>
<dbReference type="InterPro" id="IPR002477">
    <property type="entry name" value="Peptidoglycan-bd-like"/>
</dbReference>
<dbReference type="InterPro" id="IPR036365">
    <property type="entry name" value="PGBD-like_sf"/>
</dbReference>
<dbReference type="PANTHER" id="PTHR10201:SF29">
    <property type="entry name" value="72 KDA TYPE IV COLLAGENASE"/>
    <property type="match status" value="1"/>
</dbReference>
<dbReference type="PANTHER" id="PTHR10201">
    <property type="entry name" value="MATRIX METALLOPROTEINASE"/>
    <property type="match status" value="1"/>
</dbReference>
<dbReference type="Pfam" id="PF00040">
    <property type="entry name" value="fn2"/>
    <property type="match status" value="3"/>
</dbReference>
<dbReference type="Pfam" id="PF00045">
    <property type="entry name" value="Hemopexin"/>
    <property type="match status" value="4"/>
</dbReference>
<dbReference type="Pfam" id="PF00413">
    <property type="entry name" value="Peptidase_M10"/>
    <property type="match status" value="2"/>
</dbReference>
<dbReference type="Pfam" id="PF01471">
    <property type="entry name" value="PG_binding_1"/>
    <property type="match status" value="1"/>
</dbReference>
<dbReference type="PIRSF" id="PIRSF001191">
    <property type="entry name" value="Peptidase_M10A_matrix"/>
    <property type="match status" value="1"/>
</dbReference>
<dbReference type="PRINTS" id="PR00013">
    <property type="entry name" value="FNTYPEII"/>
</dbReference>
<dbReference type="PRINTS" id="PR00138">
    <property type="entry name" value="MATRIXIN"/>
</dbReference>
<dbReference type="SMART" id="SM00059">
    <property type="entry name" value="FN2"/>
    <property type="match status" value="3"/>
</dbReference>
<dbReference type="SMART" id="SM00120">
    <property type="entry name" value="HX"/>
    <property type="match status" value="4"/>
</dbReference>
<dbReference type="SMART" id="SM00235">
    <property type="entry name" value="ZnMc"/>
    <property type="match status" value="1"/>
</dbReference>
<dbReference type="SUPFAM" id="SSF50923">
    <property type="entry name" value="Hemopexin-like domain"/>
    <property type="match status" value="1"/>
</dbReference>
<dbReference type="SUPFAM" id="SSF57440">
    <property type="entry name" value="Kringle-like"/>
    <property type="match status" value="3"/>
</dbReference>
<dbReference type="SUPFAM" id="SSF55486">
    <property type="entry name" value="Metalloproteases ('zincins'), catalytic domain"/>
    <property type="match status" value="1"/>
</dbReference>
<dbReference type="SUPFAM" id="SSF47090">
    <property type="entry name" value="PGBD-like"/>
    <property type="match status" value="1"/>
</dbReference>
<dbReference type="PROSITE" id="PS00546">
    <property type="entry name" value="CYSTEINE_SWITCH"/>
    <property type="match status" value="1"/>
</dbReference>
<dbReference type="PROSITE" id="PS00023">
    <property type="entry name" value="FN2_1"/>
    <property type="match status" value="3"/>
</dbReference>
<dbReference type="PROSITE" id="PS51092">
    <property type="entry name" value="FN2_2"/>
    <property type="match status" value="3"/>
</dbReference>
<dbReference type="PROSITE" id="PS00024">
    <property type="entry name" value="HEMOPEXIN"/>
    <property type="match status" value="1"/>
</dbReference>
<dbReference type="PROSITE" id="PS51642">
    <property type="entry name" value="HEMOPEXIN_2"/>
    <property type="match status" value="4"/>
</dbReference>
<dbReference type="PROSITE" id="PS00142">
    <property type="entry name" value="ZINC_PROTEASE"/>
    <property type="match status" value="1"/>
</dbReference>
<evidence type="ECO:0000250" key="1"/>
<evidence type="ECO:0000250" key="2">
    <source>
        <dbReference type="UniProtKB" id="P08253"/>
    </source>
</evidence>
<evidence type="ECO:0000250" key="3">
    <source>
        <dbReference type="UniProtKB" id="P33436"/>
    </source>
</evidence>
<evidence type="ECO:0000255" key="4"/>
<evidence type="ECO:0000255" key="5">
    <source>
        <dbReference type="PROSITE-ProRule" id="PRU00479"/>
    </source>
</evidence>
<evidence type="ECO:0000255" key="6">
    <source>
        <dbReference type="PROSITE-ProRule" id="PRU10095"/>
    </source>
</evidence>
<evidence type="ECO:0000305" key="7"/>
<feature type="signal peptide" evidence="3">
    <location>
        <begin position="1"/>
        <end position="30"/>
    </location>
</feature>
<feature type="propeptide" id="PRO_0000244644" description="Activation peptide" evidence="1">
    <location>
        <begin position="31"/>
        <end position="110"/>
    </location>
</feature>
<feature type="chain" id="PRO_0000244645" description="72 kDa type IV collagenase">
    <location>
        <begin position="111"/>
        <end position="661"/>
    </location>
</feature>
<feature type="chain" id="PRO_0000391625" description="PEX" evidence="1">
    <location>
        <begin position="446"/>
        <end position="661"/>
    </location>
</feature>
<feature type="domain" description="Fibronectin type-II 1" evidence="5">
    <location>
        <begin position="229"/>
        <end position="277"/>
    </location>
</feature>
<feature type="domain" description="Fibronectin type-II 2" evidence="5">
    <location>
        <begin position="287"/>
        <end position="335"/>
    </location>
</feature>
<feature type="domain" description="Fibronectin type-II 3" evidence="5">
    <location>
        <begin position="345"/>
        <end position="393"/>
    </location>
</feature>
<feature type="repeat" description="Hemopexin 1">
    <location>
        <begin position="469"/>
        <end position="517"/>
    </location>
</feature>
<feature type="repeat" description="Hemopexin 2">
    <location>
        <begin position="518"/>
        <end position="564"/>
    </location>
</feature>
<feature type="repeat" description="Hemopexin 3">
    <location>
        <begin position="566"/>
        <end position="614"/>
    </location>
</feature>
<feature type="repeat" description="Hemopexin 4">
    <location>
        <begin position="615"/>
        <end position="661"/>
    </location>
</feature>
<feature type="region of interest" description="Collagenase-like 1">
    <location>
        <begin position="111"/>
        <end position="222"/>
    </location>
</feature>
<feature type="region of interest" description="Collagen-binding">
    <location>
        <begin position="223"/>
        <end position="397"/>
    </location>
</feature>
<feature type="region of interest" description="Collagenase-like 2">
    <location>
        <begin position="398"/>
        <end position="466"/>
    </location>
</feature>
<feature type="region of interest" description="Required for inhibitor TIMP2 binding" evidence="1">
    <location>
        <begin position="415"/>
        <end position="661"/>
    </location>
</feature>
<feature type="short sequence motif" description="Cysteine switch" evidence="1">
    <location>
        <begin position="101"/>
        <end position="108"/>
    </location>
</feature>
<feature type="active site" evidence="6">
    <location>
        <position position="405"/>
    </location>
</feature>
<feature type="binding site" description="in inhibited form" evidence="2">
    <location>
        <position position="103"/>
    </location>
    <ligand>
        <name>Zn(2+)</name>
        <dbReference type="ChEBI" id="CHEBI:29105"/>
        <label>1</label>
        <note>catalytic</note>
    </ligand>
</feature>
<feature type="binding site" evidence="2">
    <location>
        <position position="135"/>
    </location>
    <ligand>
        <name>Ca(2+)</name>
        <dbReference type="ChEBI" id="CHEBI:29108"/>
        <label>1</label>
    </ligand>
</feature>
<feature type="binding site" evidence="2">
    <location>
        <position position="169"/>
    </location>
    <ligand>
        <name>Ca(2+)</name>
        <dbReference type="ChEBI" id="CHEBI:29108"/>
        <label>2</label>
    </ligand>
</feature>
<feature type="binding site" evidence="2">
    <location>
        <position position="179"/>
    </location>
    <ligand>
        <name>Zn(2+)</name>
        <dbReference type="ChEBI" id="CHEBI:29105"/>
        <label>2</label>
    </ligand>
</feature>
<feature type="binding site" evidence="2">
    <location>
        <position position="181"/>
    </location>
    <ligand>
        <name>Zn(2+)</name>
        <dbReference type="ChEBI" id="CHEBI:29105"/>
        <label>2</label>
    </ligand>
</feature>
<feature type="binding site" evidence="2">
    <location>
        <position position="186"/>
    </location>
    <ligand>
        <name>Ca(2+)</name>
        <dbReference type="ChEBI" id="CHEBI:29108"/>
        <label>3</label>
    </ligand>
</feature>
<feature type="binding site" evidence="2">
    <location>
        <position position="187"/>
    </location>
    <ligand>
        <name>Ca(2+)</name>
        <dbReference type="ChEBI" id="CHEBI:29108"/>
        <label>3</label>
    </ligand>
</feature>
<feature type="binding site" evidence="2">
    <location>
        <position position="194"/>
    </location>
    <ligand>
        <name>Zn(2+)</name>
        <dbReference type="ChEBI" id="CHEBI:29105"/>
        <label>2</label>
    </ligand>
</feature>
<feature type="binding site" evidence="2">
    <location>
        <position position="201"/>
    </location>
    <ligand>
        <name>Ca(2+)</name>
        <dbReference type="ChEBI" id="CHEBI:29108"/>
        <label>2</label>
    </ligand>
</feature>
<feature type="binding site" evidence="2">
    <location>
        <position position="203"/>
    </location>
    <ligand>
        <name>Ca(2+)</name>
        <dbReference type="ChEBI" id="CHEBI:29108"/>
        <label>2</label>
    </ligand>
</feature>
<feature type="binding site" evidence="2">
    <location>
        <position position="205"/>
    </location>
    <ligand>
        <name>Ca(2+)</name>
        <dbReference type="ChEBI" id="CHEBI:29108"/>
        <label>2</label>
    </ligand>
</feature>
<feature type="binding site" evidence="2">
    <location>
        <position position="207"/>
    </location>
    <ligand>
        <name>Zn(2+)</name>
        <dbReference type="ChEBI" id="CHEBI:29105"/>
        <label>2</label>
    </ligand>
</feature>
<feature type="binding site" evidence="2">
    <location>
        <position position="209"/>
    </location>
    <ligand>
        <name>Ca(2+)</name>
        <dbReference type="ChEBI" id="CHEBI:29108"/>
        <label>3</label>
    </ligand>
</feature>
<feature type="binding site" evidence="2">
    <location>
        <position position="210"/>
    </location>
    <ligand>
        <name>Ca(2+)</name>
        <dbReference type="ChEBI" id="CHEBI:29108"/>
        <label>1</label>
    </ligand>
</feature>
<feature type="binding site" evidence="2">
    <location>
        <position position="212"/>
    </location>
    <ligand>
        <name>Ca(2+)</name>
        <dbReference type="ChEBI" id="CHEBI:29108"/>
        <label>1</label>
    </ligand>
</feature>
<feature type="binding site" evidence="2">
    <location>
        <position position="212"/>
    </location>
    <ligand>
        <name>Ca(2+)</name>
        <dbReference type="ChEBI" id="CHEBI:29108"/>
        <label>3</label>
    </ligand>
</feature>
<feature type="binding site" evidence="2">
    <location>
        <position position="404"/>
    </location>
    <ligand>
        <name>Zn(2+)</name>
        <dbReference type="ChEBI" id="CHEBI:29105"/>
        <label>1</label>
        <note>catalytic</note>
    </ligand>
</feature>
<feature type="binding site" evidence="2">
    <location>
        <position position="408"/>
    </location>
    <ligand>
        <name>Zn(2+)</name>
        <dbReference type="ChEBI" id="CHEBI:29105"/>
        <label>1</label>
        <note>catalytic</note>
    </ligand>
</feature>
<feature type="binding site" evidence="2">
    <location>
        <position position="414"/>
    </location>
    <ligand>
        <name>Zn(2+)</name>
        <dbReference type="ChEBI" id="CHEBI:29105"/>
        <label>1</label>
        <note>catalytic</note>
    </ligand>
</feature>
<feature type="binding site" evidence="2">
    <location>
        <position position="477"/>
    </location>
    <ligand>
        <name>Ca(2+)</name>
        <dbReference type="ChEBI" id="CHEBI:29108"/>
        <label>4</label>
    </ligand>
</feature>
<feature type="binding site" evidence="2">
    <location>
        <position position="522"/>
    </location>
    <ligand>
        <name>Ca(2+)</name>
        <dbReference type="ChEBI" id="CHEBI:29108"/>
        <label>4</label>
    </ligand>
</feature>
<feature type="binding site" evidence="2">
    <location>
        <position position="570"/>
    </location>
    <ligand>
        <name>Ca(2+)</name>
        <dbReference type="ChEBI" id="CHEBI:29108"/>
        <label>4</label>
    </ligand>
</feature>
<feature type="binding site" evidence="2">
    <location>
        <position position="619"/>
    </location>
    <ligand>
        <name>Ca(2+)</name>
        <dbReference type="ChEBI" id="CHEBI:29108"/>
        <label>4</label>
    </ligand>
</feature>
<feature type="glycosylation site" description="N-linked (GlcNAc...) asparagine" evidence="4">
    <location>
        <position position="574"/>
    </location>
</feature>
<feature type="glycosylation site" description="N-linked (GlcNAc...) asparagine" evidence="4">
    <location>
        <position position="643"/>
    </location>
</feature>
<feature type="disulfide bond" evidence="5">
    <location>
        <begin position="234"/>
        <end position="260"/>
    </location>
</feature>
<feature type="disulfide bond" evidence="5">
    <location>
        <begin position="248"/>
        <end position="275"/>
    </location>
</feature>
<feature type="disulfide bond" evidence="5">
    <location>
        <begin position="292"/>
        <end position="318"/>
    </location>
</feature>
<feature type="disulfide bond" evidence="5">
    <location>
        <begin position="306"/>
        <end position="333"/>
    </location>
</feature>
<feature type="disulfide bond" evidence="5">
    <location>
        <begin position="350"/>
        <end position="376"/>
    </location>
</feature>
<feature type="disulfide bond" evidence="5">
    <location>
        <begin position="364"/>
        <end position="391"/>
    </location>
</feature>
<feature type="disulfide bond" evidence="5">
    <location>
        <begin position="470"/>
        <end position="661"/>
    </location>
</feature>
<gene>
    <name type="primary">MMP2</name>
</gene>
<organism>
    <name type="scientific">Bos taurus</name>
    <name type="common">Bovine</name>
    <dbReference type="NCBI Taxonomy" id="9913"/>
    <lineage>
        <taxon>Eukaryota</taxon>
        <taxon>Metazoa</taxon>
        <taxon>Chordata</taxon>
        <taxon>Craniata</taxon>
        <taxon>Vertebrata</taxon>
        <taxon>Euteleostomi</taxon>
        <taxon>Mammalia</taxon>
        <taxon>Eutheria</taxon>
        <taxon>Laurasiatheria</taxon>
        <taxon>Artiodactyla</taxon>
        <taxon>Ruminantia</taxon>
        <taxon>Pecora</taxon>
        <taxon>Bovidae</taxon>
        <taxon>Bovinae</taxon>
        <taxon>Bos</taxon>
    </lineage>
</organism>